<feature type="chain" id="PRO_0000229021" description="Serine/threonine-protein kinase 36">
    <location>
        <begin position="1"/>
        <end position="1316"/>
    </location>
</feature>
<feature type="domain" description="Protein kinase" evidence="3">
    <location>
        <begin position="4"/>
        <end position="254"/>
    </location>
</feature>
<feature type="region of interest" description="Disordered" evidence="5">
    <location>
        <begin position="389"/>
        <end position="418"/>
    </location>
</feature>
<feature type="compositionally biased region" description="Acidic residues" evidence="5">
    <location>
        <begin position="407"/>
        <end position="418"/>
    </location>
</feature>
<feature type="active site" description="Proton acceptor" evidence="1 3 4">
    <location>
        <position position="125"/>
    </location>
</feature>
<feature type="binding site" evidence="1 3">
    <location>
        <begin position="10"/>
        <end position="18"/>
    </location>
    <ligand>
        <name>ATP</name>
        <dbReference type="ChEBI" id="CHEBI:30616"/>
    </ligand>
</feature>
<feature type="binding site" evidence="1 3">
    <location>
        <position position="33"/>
    </location>
    <ligand>
        <name>ATP</name>
        <dbReference type="ChEBI" id="CHEBI:30616"/>
    </ligand>
</feature>
<feature type="splice variant" id="VSP_040760" description="In isoform 2." evidence="12">
    <original>SCFKNFLQGLLTKDPRQRLSWPDLLHHPFIAGRVTI</original>
    <variation>V</variation>
    <location>
        <begin position="225"/>
        <end position="260"/>
    </location>
</feature>
<feature type="splice variant" id="VSP_040761" description="In isoform 3." evidence="13">
    <location>
        <begin position="461"/>
        <end position="588"/>
    </location>
</feature>
<feature type="splice variant" id="VSP_040762" description="In isoform 2." evidence="12">
    <original>QVQ</original>
    <variation>Q</variation>
    <location>
        <begin position="862"/>
        <end position="864"/>
    </location>
</feature>
<feature type="splice variant" id="VSP_040763" description="In isoform 2." evidence="12">
    <original>VCCHHLSLLQAE</original>
    <variation>V</variation>
    <location>
        <begin position="1021"/>
        <end position="1032"/>
    </location>
</feature>
<feature type="sequence conflict" description="In Ref. 2; BAD32420." evidence="14" ref="2">
    <original>G</original>
    <variation>R</variation>
    <location>
        <position position="330"/>
    </location>
</feature>
<feature type="sequence conflict" description="In Ref. 2; BAD32420." evidence="14" ref="2">
    <original>H</original>
    <variation>Y</variation>
    <location>
        <position position="471"/>
    </location>
</feature>
<feature type="sequence conflict" description="In Ref. 2; BAD32420." evidence="14" ref="2">
    <original>Y</original>
    <variation>C</variation>
    <location>
        <position position="844"/>
    </location>
</feature>
<feature type="sequence conflict" description="In Ref. 2; BAD32420." evidence="14" ref="2">
    <original>V</original>
    <variation>A</variation>
    <location>
        <position position="874"/>
    </location>
</feature>
<feature type="sequence conflict" description="In Ref. 2; BAD32420." evidence="14" ref="2">
    <original>I</original>
    <variation>T</variation>
    <location>
        <position position="881"/>
    </location>
</feature>
<gene>
    <name evidence="17" type="primary">Stk36</name>
    <name type="synonym">Kiaa1278</name>
</gene>
<name>STK36_MOUSE</name>
<dbReference type="EC" id="2.7.11.1"/>
<dbReference type="EMBL" id="AK173142">
    <property type="protein sequence ID" value="BAD32420.1"/>
    <property type="status" value="ALT_SEQ"/>
    <property type="molecule type" value="Transcribed_RNA"/>
</dbReference>
<dbReference type="EMBL" id="AC117610">
    <property type="status" value="NOT_ANNOTATED_CDS"/>
    <property type="molecule type" value="Genomic_DNA"/>
</dbReference>
<dbReference type="EMBL" id="BC043103">
    <property type="protein sequence ID" value="AAH43103.1"/>
    <property type="status" value="ALT_SEQ"/>
    <property type="molecule type" value="mRNA"/>
</dbReference>
<dbReference type="EMBL" id="BC058698">
    <property type="protein sequence ID" value="AAH58698.1"/>
    <property type="molecule type" value="mRNA"/>
</dbReference>
<dbReference type="CCDS" id="CCDS35619.1">
    <molecule id="Q69ZM6-1"/>
</dbReference>
<dbReference type="RefSeq" id="NP_001391007.1">
    <molecule id="Q69ZM6-3"/>
    <property type="nucleotide sequence ID" value="NM_001404078.1"/>
</dbReference>
<dbReference type="RefSeq" id="NP_778196.2">
    <molecule id="Q69ZM6-1"/>
    <property type="nucleotide sequence ID" value="NM_175031.4"/>
</dbReference>
<dbReference type="SMR" id="Q69ZM6"/>
<dbReference type="BioGRID" id="234622">
    <property type="interactions" value="3"/>
</dbReference>
<dbReference type="DIP" id="DIP-59751N"/>
<dbReference type="FunCoup" id="Q69ZM6">
    <property type="interactions" value="1004"/>
</dbReference>
<dbReference type="IntAct" id="Q69ZM6">
    <property type="interactions" value="2"/>
</dbReference>
<dbReference type="STRING" id="10090.ENSMUSP00000084430"/>
<dbReference type="iPTMnet" id="Q69ZM6"/>
<dbReference type="PhosphoSitePlus" id="Q69ZM6"/>
<dbReference type="SwissPalm" id="Q69ZM6"/>
<dbReference type="PaxDb" id="10090-ENSMUSP00000084430"/>
<dbReference type="ProteomicsDB" id="258758">
    <molecule id="Q69ZM6-1"/>
</dbReference>
<dbReference type="ProteomicsDB" id="258759">
    <molecule id="Q69ZM6-2"/>
</dbReference>
<dbReference type="ProteomicsDB" id="258760">
    <molecule id="Q69ZM6-3"/>
</dbReference>
<dbReference type="Antibodypedia" id="34284">
    <property type="antibodies" value="179 antibodies from 29 providers"/>
</dbReference>
<dbReference type="DNASU" id="269209"/>
<dbReference type="Ensembl" id="ENSMUST00000087183.11">
    <molecule id="Q69ZM6-1"/>
    <property type="protein sequence ID" value="ENSMUSP00000084430.5"/>
    <property type="gene ID" value="ENSMUSG00000033276.19"/>
</dbReference>
<dbReference type="Ensembl" id="ENSMUST00000087186.11">
    <molecule id="Q69ZM6-3"/>
    <property type="protein sequence ID" value="ENSMUSP00000084433.5"/>
    <property type="gene ID" value="ENSMUSG00000033276.19"/>
</dbReference>
<dbReference type="GeneID" id="269209"/>
<dbReference type="KEGG" id="mmu:269209"/>
<dbReference type="UCSC" id="uc007bmu.1">
    <molecule id="Q69ZM6-1"/>
    <property type="organism name" value="mouse"/>
</dbReference>
<dbReference type="UCSC" id="uc011wnc.1">
    <molecule id="Q69ZM6-3"/>
    <property type="organism name" value="mouse"/>
</dbReference>
<dbReference type="AGR" id="MGI:1920831"/>
<dbReference type="CTD" id="27148"/>
<dbReference type="MGI" id="MGI:1920831">
    <property type="gene designation" value="Stk36"/>
</dbReference>
<dbReference type="VEuPathDB" id="HostDB:ENSMUSG00000033276"/>
<dbReference type="eggNOG" id="KOG0597">
    <property type="taxonomic scope" value="Eukaryota"/>
</dbReference>
<dbReference type="GeneTree" id="ENSGT00940000158375"/>
<dbReference type="HOGENOM" id="CLU_002453_2_0_1"/>
<dbReference type="InParanoid" id="Q69ZM6"/>
<dbReference type="OrthoDB" id="266718at2759"/>
<dbReference type="PhylomeDB" id="Q69ZM6"/>
<dbReference type="TreeFam" id="TF105340"/>
<dbReference type="BioGRID-ORCS" id="269209">
    <property type="hits" value="0 hits in 80 CRISPR screens"/>
</dbReference>
<dbReference type="PRO" id="PR:Q69ZM6"/>
<dbReference type="Proteomes" id="UP000000589">
    <property type="component" value="Chromosome 1"/>
</dbReference>
<dbReference type="RNAct" id="Q69ZM6">
    <property type="molecule type" value="protein"/>
</dbReference>
<dbReference type="Bgee" id="ENSMUSG00000033276">
    <property type="expression patterns" value="Expressed in gastrula and 121 other cell types or tissues"/>
</dbReference>
<dbReference type="ExpressionAtlas" id="Q69ZM6">
    <property type="expression patterns" value="baseline and differential"/>
</dbReference>
<dbReference type="GO" id="GO:0042995">
    <property type="term" value="C:cell projection"/>
    <property type="evidence" value="ECO:0007669"/>
    <property type="project" value="UniProtKB-KW"/>
</dbReference>
<dbReference type="GO" id="GO:0005737">
    <property type="term" value="C:cytoplasm"/>
    <property type="evidence" value="ECO:0000314"/>
    <property type="project" value="UniProtKB"/>
</dbReference>
<dbReference type="GO" id="GO:0005856">
    <property type="term" value="C:cytoskeleton"/>
    <property type="evidence" value="ECO:0007669"/>
    <property type="project" value="UniProtKB-KW"/>
</dbReference>
<dbReference type="GO" id="GO:0005829">
    <property type="term" value="C:cytosol"/>
    <property type="evidence" value="ECO:0007669"/>
    <property type="project" value="Ensembl"/>
</dbReference>
<dbReference type="GO" id="GO:0005576">
    <property type="term" value="C:extracellular region"/>
    <property type="evidence" value="ECO:0007669"/>
    <property type="project" value="GOC"/>
</dbReference>
<dbReference type="GO" id="GO:0005634">
    <property type="term" value="C:nucleus"/>
    <property type="evidence" value="ECO:0000250"/>
    <property type="project" value="UniProtKB"/>
</dbReference>
<dbReference type="GO" id="GO:0005524">
    <property type="term" value="F:ATP binding"/>
    <property type="evidence" value="ECO:0007669"/>
    <property type="project" value="UniProtKB-KW"/>
</dbReference>
<dbReference type="GO" id="GO:0046872">
    <property type="term" value="F:metal ion binding"/>
    <property type="evidence" value="ECO:0007669"/>
    <property type="project" value="UniProtKB-KW"/>
</dbReference>
<dbReference type="GO" id="GO:0106310">
    <property type="term" value="F:protein serine kinase activity"/>
    <property type="evidence" value="ECO:0007669"/>
    <property type="project" value="RHEA"/>
</dbReference>
<dbReference type="GO" id="GO:0004674">
    <property type="term" value="F:protein serine/threonine kinase activity"/>
    <property type="evidence" value="ECO:0007669"/>
    <property type="project" value="UniProtKB-KW"/>
</dbReference>
<dbReference type="GO" id="GO:0001222">
    <property type="term" value="F:transcription corepressor binding"/>
    <property type="evidence" value="ECO:0000250"/>
    <property type="project" value="UniProtKB"/>
</dbReference>
<dbReference type="GO" id="GO:0035082">
    <property type="term" value="P:axoneme assembly"/>
    <property type="evidence" value="ECO:0000250"/>
    <property type="project" value="UniProtKB"/>
</dbReference>
<dbReference type="GO" id="GO:0007420">
    <property type="term" value="P:brain development"/>
    <property type="evidence" value="ECO:0000315"/>
    <property type="project" value="MGI"/>
</dbReference>
<dbReference type="GO" id="GO:0060271">
    <property type="term" value="P:cilium assembly"/>
    <property type="evidence" value="ECO:0000314"/>
    <property type="project" value="UniProtKB"/>
</dbReference>
<dbReference type="GO" id="GO:0003351">
    <property type="term" value="P:epithelial cilium movement involved in extracellular fluid movement"/>
    <property type="evidence" value="ECO:0000315"/>
    <property type="project" value="MGI"/>
</dbReference>
<dbReference type="GO" id="GO:0045880">
    <property type="term" value="P:positive regulation of smoothened signaling pathway"/>
    <property type="evidence" value="ECO:0000314"/>
    <property type="project" value="UniProtKB"/>
</dbReference>
<dbReference type="GO" id="GO:0009791">
    <property type="term" value="P:post-embryonic development"/>
    <property type="evidence" value="ECO:0000315"/>
    <property type="project" value="UniProtKB"/>
</dbReference>
<dbReference type="GO" id="GO:0051090">
    <property type="term" value="P:regulation of DNA-binding transcription factor activity"/>
    <property type="evidence" value="ECO:0000250"/>
    <property type="project" value="UniProtKB"/>
</dbReference>
<dbReference type="GO" id="GO:0007224">
    <property type="term" value="P:smoothened signaling pathway"/>
    <property type="evidence" value="ECO:0000314"/>
    <property type="project" value="UniProtKB"/>
</dbReference>
<dbReference type="CDD" id="cd14002">
    <property type="entry name" value="STKc_STK36"/>
    <property type="match status" value="1"/>
</dbReference>
<dbReference type="FunFam" id="3.30.200.20:FF:000042">
    <property type="entry name" value="Aurora kinase A"/>
    <property type="match status" value="1"/>
</dbReference>
<dbReference type="FunFam" id="1.10.510.10:FF:000292">
    <property type="entry name" value="Serine/threonine-protein kinase 36"/>
    <property type="match status" value="1"/>
</dbReference>
<dbReference type="FunFam" id="1.25.10.10:FF:000325">
    <property type="entry name" value="Serine/threonine-protein kinase 36"/>
    <property type="match status" value="1"/>
</dbReference>
<dbReference type="Gene3D" id="1.25.10.10">
    <property type="entry name" value="Leucine-rich Repeat Variant"/>
    <property type="match status" value="1"/>
</dbReference>
<dbReference type="Gene3D" id="1.10.510.10">
    <property type="entry name" value="Transferase(Phosphotransferase) domain 1"/>
    <property type="match status" value="1"/>
</dbReference>
<dbReference type="InterPro" id="IPR011989">
    <property type="entry name" value="ARM-like"/>
</dbReference>
<dbReference type="InterPro" id="IPR016024">
    <property type="entry name" value="ARM-type_fold"/>
</dbReference>
<dbReference type="InterPro" id="IPR011009">
    <property type="entry name" value="Kinase-like_dom_sf"/>
</dbReference>
<dbReference type="InterPro" id="IPR000719">
    <property type="entry name" value="Prot_kinase_dom"/>
</dbReference>
<dbReference type="InterPro" id="IPR017441">
    <property type="entry name" value="Protein_kinase_ATP_BS"/>
</dbReference>
<dbReference type="InterPro" id="IPR008271">
    <property type="entry name" value="Ser/Thr_kinase_AS"/>
</dbReference>
<dbReference type="PANTHER" id="PTHR22983">
    <property type="entry name" value="PROTEIN KINASE RELATED"/>
    <property type="match status" value="1"/>
</dbReference>
<dbReference type="PANTHER" id="PTHR22983:SF6">
    <property type="entry name" value="SERINE_THREONINE-PROTEIN KINASE 36"/>
    <property type="match status" value="1"/>
</dbReference>
<dbReference type="Pfam" id="PF13646">
    <property type="entry name" value="HEAT_2"/>
    <property type="match status" value="1"/>
</dbReference>
<dbReference type="Pfam" id="PF00069">
    <property type="entry name" value="Pkinase"/>
    <property type="match status" value="1"/>
</dbReference>
<dbReference type="SMART" id="SM00220">
    <property type="entry name" value="S_TKc"/>
    <property type="match status" value="1"/>
</dbReference>
<dbReference type="SUPFAM" id="SSF48371">
    <property type="entry name" value="ARM repeat"/>
    <property type="match status" value="2"/>
</dbReference>
<dbReference type="SUPFAM" id="SSF56112">
    <property type="entry name" value="Protein kinase-like (PK-like)"/>
    <property type="match status" value="1"/>
</dbReference>
<dbReference type="PROSITE" id="PS00107">
    <property type="entry name" value="PROTEIN_KINASE_ATP"/>
    <property type="match status" value="1"/>
</dbReference>
<dbReference type="PROSITE" id="PS50011">
    <property type="entry name" value="PROTEIN_KINASE_DOM"/>
    <property type="match status" value="1"/>
</dbReference>
<dbReference type="PROSITE" id="PS00108">
    <property type="entry name" value="PROTEIN_KINASE_ST"/>
    <property type="match status" value="1"/>
</dbReference>
<proteinExistence type="evidence at protein level"/>
<sequence>MEKYHVLEMIGEGSFGRVYKGRKKYSAQVVALKFIPKLGRSEKELRNLQREIEIMRGLWHPNIVHMLDSFETDKEVVVVTDYAEGELFQILEDDGKLPEDQVQAIAAQLVSALYYLHSHRILHRDMKPQNILLAKGGGIKLCDFGFARAMSTNTMVLTSIKGTPLYMSPELVEERPYDHTADLWSVGCILYELAVGTPPFYTTSIFQLVSLILKDPVRWPSTISSCFKNFLQGLLTKDPRQRLSWPDLLHHPFIAGRVTIITEPAGSDLGTPFTSRLPPELQVLKDEQAHRLAPKGNQSRILRQACKLMAEEAKQKEDQNAGSALEQEDGLCKVTPSTAPVPGLKATPQESSLLAGILASEMKNNWEDWGAGEAPRTSRENHINLECEQGFPEPRPEAMGRQSTDVVDPENEEPDSDDEWQRLLETSEPGPVQLKSPLTLLCNPDFCQRIQSQLRGTGEQILKGVLDGVSHLLPVLRILSSLLSSCNDSVLLYSFCQEAGLPELPLSLLRYSQESSSIQQQPWYGALLRDLVAVVQAYFSCTFNLERSQTGDSLQVFQEAASLFLDLLGKLLAQSDDSEQTFRRDSLMCFAVLCEAVDGNSWAVSKAFYSSLLTTQRAVLDGLLHGLTVPQLPFHTPPGAPQVSQPLREQSEDVPGAISSALAAMCTAPVGLPSCWDAKEQVSWHLANQLTEDSSQLRPSLISGLRHHVLCLHLLKVLYACCYISERLCHILGQEPLALESLLMLVQGKVKVADWEESTEVALYLLSLLVFRLQDLPSGMEKLGSEVATLFTHSHVVSLVNAAACLLGQLGQQGVTFDLQPREWIAAAAHALSAPAEVRLTPPYSCGFYDGLLILLLQLLMQVQGKPGLIRDVVGSEVWTILWHRFSMALRLPEEVSAQEDDLLLSSPSSLEPDWTLISPQGMAALLSLAMAIFTQESQLCLSHLSQHGSVLMLTLKHLLSPSFLHHLSQAPQGPEFLPVVVLSVCKLLCFPFALDVDADLLVGVLADLRASEVVVCLLQVCCHHLSLLQAELPIGLLTRLALTDSASLKQFVNTVATSSRAIISFLSVVLLSDQPLMISDLLSLLTHTARILSPSHLSFIQELLSGSDESYRPLRSLLGHSENTVRVRAYGLLGHLLQHSMALRGALQSQSGLLNLLLLGLGDKDPAVRRSASFAVGNAAYQAGPLGPALAAAVPSMTQLLGDAQDGIRRNAASALGNLGPEGLGKELLKCQVPQRLLEMACGDPQPTVKEAALIALRSLQQESCIHQVLVSLGASEKLALLSLGNQLLPNSSNRPASVRHCRKLIQLLRPTHST</sequence>
<accession>Q69ZM6</accession>
<accession>Q6PDI0</accession>
<accession>Q80XQ6</accession>
<evidence type="ECO:0000250" key="1">
    <source>
        <dbReference type="UniProtKB" id="P23647"/>
    </source>
</evidence>
<evidence type="ECO:0000250" key="2">
    <source>
        <dbReference type="UniProtKB" id="Q9NRP7"/>
    </source>
</evidence>
<evidence type="ECO:0000255" key="3">
    <source>
        <dbReference type="PROSITE-ProRule" id="PRU00159"/>
    </source>
</evidence>
<evidence type="ECO:0000255" key="4">
    <source>
        <dbReference type="PROSITE-ProRule" id="PRU10027"/>
    </source>
</evidence>
<evidence type="ECO:0000256" key="5">
    <source>
        <dbReference type="SAM" id="MobiDB-lite"/>
    </source>
</evidence>
<evidence type="ECO:0000269" key="6">
    <source>
    </source>
</evidence>
<evidence type="ECO:0000269" key="7">
    <source>
    </source>
</evidence>
<evidence type="ECO:0000269" key="8">
    <source>
    </source>
</evidence>
<evidence type="ECO:0000269" key="9">
    <source>
    </source>
</evidence>
<evidence type="ECO:0000269" key="10">
    <source>
    </source>
</evidence>
<evidence type="ECO:0000269" key="11">
    <source>
    </source>
</evidence>
<evidence type="ECO:0000303" key="12">
    <source>
    </source>
</evidence>
<evidence type="ECO:0000303" key="13">
    <source>
    </source>
</evidence>
<evidence type="ECO:0000305" key="14"/>
<evidence type="ECO:0000312" key="15">
    <source>
        <dbReference type="EMBL" id="AAH58698.1"/>
    </source>
</evidence>
<evidence type="ECO:0000312" key="16">
    <source>
        <dbReference type="EMBL" id="BAD32420.1"/>
    </source>
</evidence>
<evidence type="ECO:0000312" key="17">
    <source>
        <dbReference type="MGI" id="MGI:1920831"/>
    </source>
</evidence>
<protein>
    <recommendedName>
        <fullName>Serine/threonine-protein kinase 36</fullName>
        <ecNumber>2.7.11.1</ecNumber>
    </recommendedName>
    <alternativeName>
        <fullName>Fused homolog</fullName>
    </alternativeName>
</protein>
<keyword id="KW-0025">Alternative splicing</keyword>
<keyword id="KW-0067">ATP-binding</keyword>
<keyword id="KW-0966">Cell projection</keyword>
<keyword id="KW-0970">Cilium biogenesis/degradation</keyword>
<keyword id="KW-0963">Cytoplasm</keyword>
<keyword id="KW-0206">Cytoskeleton</keyword>
<keyword id="KW-0217">Developmental protein</keyword>
<keyword id="KW-0418">Kinase</keyword>
<keyword id="KW-0460">Magnesium</keyword>
<keyword id="KW-0479">Metal-binding</keyword>
<keyword id="KW-0547">Nucleotide-binding</keyword>
<keyword id="KW-0539">Nucleus</keyword>
<keyword id="KW-1185">Reference proteome</keyword>
<keyword id="KW-0723">Serine/threonine-protein kinase</keyword>
<keyword id="KW-0808">Transferase</keyword>
<organism>
    <name type="scientific">Mus musculus</name>
    <name type="common">Mouse</name>
    <dbReference type="NCBI Taxonomy" id="10090"/>
    <lineage>
        <taxon>Eukaryota</taxon>
        <taxon>Metazoa</taxon>
        <taxon>Chordata</taxon>
        <taxon>Craniata</taxon>
        <taxon>Vertebrata</taxon>
        <taxon>Euteleostomi</taxon>
        <taxon>Mammalia</taxon>
        <taxon>Eutheria</taxon>
        <taxon>Euarchontoglires</taxon>
        <taxon>Glires</taxon>
        <taxon>Rodentia</taxon>
        <taxon>Myomorpha</taxon>
        <taxon>Muroidea</taxon>
        <taxon>Muridae</taxon>
        <taxon>Murinae</taxon>
        <taxon>Mus</taxon>
        <taxon>Mus</taxon>
    </lineage>
</organism>
<reference key="1">
    <citation type="journal article" date="2007" name="J. Cell Commun. Signal.">
        <title>A possible role of mouse Fused (STK36) in Hedgehog signaling and Gli transcription factor regulation.</title>
        <authorList>
            <person name="Maloveryan A."/>
            <person name="Finta C."/>
            <person name="Osterlund T."/>
            <person name="Kogerman P."/>
        </authorList>
    </citation>
    <scope>NUCLEOTIDE SEQUENCE [MRNA] (ISOFORM 1)</scope>
    <scope>FUNCTION</scope>
    <scope>TISSUE SPECIFICITY</scope>
</reference>
<reference evidence="14 16" key="2">
    <citation type="journal article" date="2004" name="DNA Res.">
        <title>Prediction of the coding sequences of mouse homologues of KIAA gene: IV. The complete nucleotide sequences of 500 mouse KIAA-homologous cDNAs identified by screening of terminal sequences of cDNA clones randomly sampled from size-fractionated libraries.</title>
        <authorList>
            <person name="Okazaki N."/>
            <person name="Kikuno R."/>
            <person name="Ohara R."/>
            <person name="Inamoto S."/>
            <person name="Koseki H."/>
            <person name="Hiraoka S."/>
            <person name="Saga Y."/>
            <person name="Seino S."/>
            <person name="Nishimura M."/>
            <person name="Kaisho T."/>
            <person name="Hoshino K."/>
            <person name="Kitamura H."/>
            <person name="Nagase T."/>
            <person name="Ohara O."/>
            <person name="Koga H."/>
        </authorList>
    </citation>
    <scope>NUCLEOTIDE SEQUENCE [LARGE SCALE MRNA] (ISOFORM 2)</scope>
    <source>
        <tissue evidence="16">Fetal brain</tissue>
    </source>
</reference>
<reference key="3">
    <citation type="journal article" date="2009" name="PLoS Biol.">
        <title>Lineage-specific biology revealed by a finished genome assembly of the mouse.</title>
        <authorList>
            <person name="Church D.M."/>
            <person name="Goodstadt L."/>
            <person name="Hillier L.W."/>
            <person name="Zody M.C."/>
            <person name="Goldstein S."/>
            <person name="She X."/>
            <person name="Bult C.J."/>
            <person name="Agarwala R."/>
            <person name="Cherry J.L."/>
            <person name="DiCuccio M."/>
            <person name="Hlavina W."/>
            <person name="Kapustin Y."/>
            <person name="Meric P."/>
            <person name="Maglott D."/>
            <person name="Birtle Z."/>
            <person name="Marques A.C."/>
            <person name="Graves T."/>
            <person name="Zhou S."/>
            <person name="Teague B."/>
            <person name="Potamousis K."/>
            <person name="Churas C."/>
            <person name="Place M."/>
            <person name="Herschleb J."/>
            <person name="Runnheim R."/>
            <person name="Forrest D."/>
            <person name="Amos-Landgraf J."/>
            <person name="Schwartz D.C."/>
            <person name="Cheng Z."/>
            <person name="Lindblad-Toh K."/>
            <person name="Eichler E.E."/>
            <person name="Ponting C.P."/>
        </authorList>
    </citation>
    <scope>NUCLEOTIDE SEQUENCE [LARGE SCALE GENOMIC DNA]</scope>
    <source>
        <strain>C57BL/6J</strain>
    </source>
</reference>
<reference evidence="14 15" key="4">
    <citation type="journal article" date="2004" name="Genome Res.">
        <title>The status, quality, and expansion of the NIH full-length cDNA project: the Mammalian Gene Collection (MGC).</title>
        <authorList>
            <consortium name="The MGC Project Team"/>
        </authorList>
    </citation>
    <scope>NUCLEOTIDE SEQUENCE [LARGE SCALE MRNA] (ISOFORM 3)</scope>
    <source>
        <strain evidence="15">C57BL/6J</strain>
        <tissue evidence="15">Brain</tissue>
    </source>
</reference>
<reference evidence="14" key="5">
    <citation type="journal article" date="2000" name="Nat. Cell Biol.">
        <title>Gli regulation by the opposing activities of fused and suppressor of fused.</title>
        <authorList>
            <person name="Murone M."/>
            <person name="Luoh S.-L."/>
            <person name="Stone D."/>
            <person name="Li W."/>
            <person name="Gurney A."/>
            <person name="Armanini M."/>
            <person name="Grey C."/>
            <person name="Rosenthal A."/>
            <person name="de Sauvage F.J."/>
        </authorList>
    </citation>
    <scope>DEVELOPMENTAL STAGE</scope>
</reference>
<reference evidence="14" key="6">
    <citation type="journal article" date="2005" name="Mol. Cell. Biol.">
        <title>Loss of the serine/threonine kinase fused results in postnatal growth defects and lethality due to progressive hydrocephalus.</title>
        <authorList>
            <person name="Merchant M."/>
            <person name="Evangelista M."/>
            <person name="Luoh S.-M."/>
            <person name="Frantz G.D."/>
            <person name="Chalasani S."/>
            <person name="Carano R.A."/>
            <person name="van Hoy M."/>
            <person name="Ramirez J."/>
            <person name="Ogasawara A.K."/>
            <person name="McFarland L.M."/>
            <person name="Filvaroff E.H."/>
            <person name="French D.M."/>
            <person name="de Sauvage F.J."/>
        </authorList>
    </citation>
    <scope>FUNCTION</scope>
    <scope>TISSUE SPECIFICITY</scope>
    <scope>DISRUPTION PHENOTYPE</scope>
</reference>
<reference key="7">
    <citation type="journal article" date="2009" name="Nature">
        <title>Fused has evolved divergent roles in vertebrate Hedgehog signalling and motile ciliogenesis.</title>
        <authorList>
            <person name="Wilson C.W."/>
            <person name="Nguyen C.T."/>
            <person name="Chen M.H."/>
            <person name="Yang J.H."/>
            <person name="Gacayan R."/>
            <person name="Huang J."/>
            <person name="Chen J.N."/>
            <person name="Chuang P.T."/>
        </authorList>
    </citation>
    <scope>FUNCTION</scope>
    <scope>SUBCELLULAR LOCATION</scope>
    <scope>INTERACTION WITH SPAG16 AND KIF27</scope>
</reference>
<reference key="8">
    <citation type="journal article" date="2010" name="Cell">
        <title>A tissue-specific atlas of mouse protein phosphorylation and expression.</title>
        <authorList>
            <person name="Huttlin E.L."/>
            <person name="Jedrychowski M.P."/>
            <person name="Elias J.E."/>
            <person name="Goswami T."/>
            <person name="Rad R."/>
            <person name="Beausoleil S.A."/>
            <person name="Villen J."/>
            <person name="Haas W."/>
            <person name="Sowa M.E."/>
            <person name="Gygi S.P."/>
        </authorList>
    </citation>
    <scope>IDENTIFICATION BY MASS SPECTROMETRY [LARGE SCALE ANALYSIS]</scope>
    <source>
        <tissue>Testis</tissue>
    </source>
</reference>
<comment type="function">
    <text evidence="9 10 11">Serine/threonine protein kinase which plays an important role in the sonic hedgehog (Shh) pathway by regulating the activity of GLI transcription factors. Controls the activity of the transcriptional regulators GLI1, GLI2 and GLI3 by opposing the effect of SUFU and promoting their nuclear localization. GLI2 requires an additional function of STK36 to become transcriptionally active, but the enzyme does not need to possess an active kinase catalytic site for this to occur. Required for postnatal development, possibly by regulating the homeostasis of cerebral spinal fluid or ciliary function. Essential for construction of the central pair apparatus of motile cilia.</text>
</comment>
<comment type="catalytic activity">
    <reaction evidence="1">
        <text>L-seryl-[protein] + ATP = O-phospho-L-seryl-[protein] + ADP + H(+)</text>
        <dbReference type="Rhea" id="RHEA:17989"/>
        <dbReference type="Rhea" id="RHEA-COMP:9863"/>
        <dbReference type="Rhea" id="RHEA-COMP:11604"/>
        <dbReference type="ChEBI" id="CHEBI:15378"/>
        <dbReference type="ChEBI" id="CHEBI:29999"/>
        <dbReference type="ChEBI" id="CHEBI:30616"/>
        <dbReference type="ChEBI" id="CHEBI:83421"/>
        <dbReference type="ChEBI" id="CHEBI:456216"/>
        <dbReference type="EC" id="2.7.11.1"/>
    </reaction>
</comment>
<comment type="catalytic activity">
    <reaction evidence="1">
        <text>L-threonyl-[protein] + ATP = O-phospho-L-threonyl-[protein] + ADP + H(+)</text>
        <dbReference type="Rhea" id="RHEA:46608"/>
        <dbReference type="Rhea" id="RHEA-COMP:11060"/>
        <dbReference type="Rhea" id="RHEA-COMP:11605"/>
        <dbReference type="ChEBI" id="CHEBI:15378"/>
        <dbReference type="ChEBI" id="CHEBI:30013"/>
        <dbReference type="ChEBI" id="CHEBI:30616"/>
        <dbReference type="ChEBI" id="CHEBI:61977"/>
        <dbReference type="ChEBI" id="CHEBI:456216"/>
        <dbReference type="EC" id="2.7.11.1"/>
    </reaction>
</comment>
<comment type="cofactor">
    <cofactor evidence="14">
        <name>Mg(2+)</name>
        <dbReference type="ChEBI" id="CHEBI:18420"/>
    </cofactor>
</comment>
<comment type="subunit">
    <text evidence="11">Interacts with SPAG16 and KIF27.</text>
</comment>
<comment type="interaction">
    <interactant intactId="EBI-15765145">
        <id>Q69ZM6</id>
    </interactant>
    <interactant intactId="EBI-15765182">
        <id>Q7M6Z4</id>
        <label>Kif27</label>
    </interactant>
    <organismsDiffer>false</organismsDiffer>
    <experiments>2</experiments>
</comment>
<comment type="subcellular location">
    <subcellularLocation>
        <location evidence="11">Cytoplasm</location>
    </subcellularLocation>
    <subcellularLocation>
        <location evidence="2">Nucleus</location>
    </subcellularLocation>
    <subcellularLocation>
        <location>Cytoplasm</location>
        <location>Cytoskeleton</location>
        <location>Cilium axoneme</location>
    </subcellularLocation>
    <text evidence="2">Low levels also present in the nucleus.</text>
</comment>
<comment type="alternative products">
    <event type="alternative splicing"/>
    <isoform>
        <id>Q69ZM6-1</id>
        <name evidence="7">1</name>
        <sequence type="displayed"/>
    </isoform>
    <isoform>
        <id>Q69ZM6-2</id>
        <name evidence="8">2</name>
        <sequence type="described" ref="VSP_040760 VSP_040762 VSP_040763"/>
    </isoform>
    <isoform>
        <id>Q69ZM6-3</id>
        <name evidence="8">3</name>
        <sequence type="described" ref="VSP_040761"/>
    </isoform>
</comment>
<comment type="tissue specificity">
    <text evidence="9 10">Weakly expressed in the heart and thymus, present at moderate to high levels in the lungs, pancreas, and kidneys and at higher levels in the brain and cerebellum. Very highly expressed in the testis.</text>
</comment>
<comment type="developmental stage">
    <text evidence="6">At 13.5 dpc is widely distributed in the forebrain, midbrain, hindbrain, spinal cord, somites, developing limb buds and skin.</text>
</comment>
<comment type="disruption phenotype">
    <text evidence="9">Mice display profound growth retardation with a communicating form of hydrocephalus, nasal inflammation and early mortality.</text>
</comment>
<comment type="similarity">
    <text evidence="3">Belongs to the protein kinase superfamily. Ser/Thr protein kinase family.</text>
</comment>
<comment type="sequence caution" evidence="14">
    <conflict type="miscellaneous discrepancy">
        <sequence resource="EMBL-CDS" id="AAH43103"/>
    </conflict>
    <text>Contaminating sequence. Sequence of unknown origin in the C-terminal part.</text>
</comment>
<comment type="sequence caution" evidence="14">
    <conflict type="frameshift">
        <sequence resource="EMBL-CDS" id="BAD32420"/>
    </conflict>
</comment>